<dbReference type="EMBL" id="L29059">
    <property type="protein sequence ID" value="AAA72433.1"/>
    <property type="molecule type" value="Genomic_DNA"/>
</dbReference>
<dbReference type="PIR" id="E53589">
    <property type="entry name" value="E53589"/>
</dbReference>
<dbReference type="RefSeq" id="WP_369692067.1">
    <property type="nucleotide sequence ID" value="NZ_LN846932.1"/>
</dbReference>
<dbReference type="SMR" id="P38583"/>
<dbReference type="GO" id="GO:0030153">
    <property type="term" value="P:bacteriocin immunity"/>
    <property type="evidence" value="ECO:0007669"/>
    <property type="project" value="InterPro"/>
</dbReference>
<dbReference type="Gene3D" id="1.20.1440.140">
    <property type="match status" value="1"/>
</dbReference>
<dbReference type="InterPro" id="IPR053739">
    <property type="entry name" value="Bact_Immunity_Domain_sf"/>
</dbReference>
<dbReference type="InterPro" id="IPR015046">
    <property type="entry name" value="LciA_Immunity-like"/>
</dbReference>
<dbReference type="Pfam" id="PF08951">
    <property type="entry name" value="EntA_Immun"/>
    <property type="match status" value="1"/>
</dbReference>
<feature type="chain" id="PRO_0000066148" description="Uncharacterized 9.1 kDa protein in BM1 immunity protein 3'region">
    <location>
        <begin position="1"/>
        <end position="81"/>
    </location>
</feature>
<proteinExistence type="predicted"/>
<name>YBM1_CARML</name>
<accession>P38583</accession>
<organism>
    <name type="scientific">Carnobacterium maltaromaticum</name>
    <name type="common">Carnobacterium piscicola</name>
    <dbReference type="NCBI Taxonomy" id="2751"/>
    <lineage>
        <taxon>Bacteria</taxon>
        <taxon>Bacillati</taxon>
        <taxon>Bacillota</taxon>
        <taxon>Bacilli</taxon>
        <taxon>Lactobacillales</taxon>
        <taxon>Carnobacteriaceae</taxon>
        <taxon>Carnobacterium</taxon>
    </lineage>
</organism>
<sequence length="81" mass="9070">MATITDLLNDLKIDLGNESLQNVLENYLEELEQANAAVPIILGRMNIDISTAIRKDGVTLSEIQSKKLKELISISYIKYGY</sequence>
<protein>
    <recommendedName>
        <fullName>Uncharacterized 9.1 kDa protein in BM1 immunity protein 3'region</fullName>
    </recommendedName>
</protein>
<reference key="1">
    <citation type="journal article" date="1994" name="J. Biol. Chem.">
        <title>Chemical and genetic characterization of bacteriocins produced by Carnobacterium piscicola LV17B.</title>
        <authorList>
            <person name="Quadri L.E.N."/>
            <person name="Sailer M."/>
            <person name="Roy K.L."/>
            <person name="Vederas J.C."/>
            <person name="Stiles M.E."/>
        </authorList>
    </citation>
    <scope>NUCLEOTIDE SEQUENCE [GENOMIC DNA]</scope>
    <source>
        <strain>LV17B</strain>
    </source>
</reference>